<protein>
    <recommendedName>
        <fullName evidence="1">DNA replication and repair protein RecF</fullName>
    </recommendedName>
</protein>
<sequence>MQITRLNIERVRNLKAVALSGLQPFNIFYGANGSGKTSILEAVHLLATGRSFRTHMPKHYIQQNAQDAIIFAQSLSEKIGMQKLLSGEQLIKVNGDTVATQGQLAKLLPLQHLDPQSTDIIDHGAKPRRQLLDWLMFHVEPEFYFAWQYYSRALKQRNMLLKTKRQLSLAELEPWNKMLSEYGEMLHSQRLVTVERWKDFFQQDLAQLLPDLQIELEYSPGFHSEVGLWQDLLNYHNKDVERRYTEYGPHRADLRLKTALGDADDVLSRGQKKLLMMALKLSQIAMLHASNKETVVLLDDLTAELDSNAQRRLIERLSQLGSQVFITTLDHQAVTQHLDGLSISYQLYNVDHGQVHAV</sequence>
<organism>
    <name type="scientific">Acinetobacter baylyi (strain ATCC 33305 / BD413 / ADP1)</name>
    <dbReference type="NCBI Taxonomy" id="62977"/>
    <lineage>
        <taxon>Bacteria</taxon>
        <taxon>Pseudomonadati</taxon>
        <taxon>Pseudomonadota</taxon>
        <taxon>Gammaproteobacteria</taxon>
        <taxon>Moraxellales</taxon>
        <taxon>Moraxellaceae</taxon>
        <taxon>Acinetobacter</taxon>
    </lineage>
</organism>
<comment type="function">
    <text evidence="1">The RecF protein is involved in DNA metabolism; it is required for DNA replication and normal SOS inducibility. RecF binds preferentially to single-stranded, linear DNA. It also seems to bind ATP.</text>
</comment>
<comment type="subcellular location">
    <subcellularLocation>
        <location evidence="1">Cytoplasm</location>
    </subcellularLocation>
</comment>
<comment type="similarity">
    <text evidence="1">Belongs to the RecF family.</text>
</comment>
<dbReference type="EMBL" id="CR543861">
    <property type="protein sequence ID" value="CAG66988.1"/>
    <property type="molecule type" value="Genomic_DNA"/>
</dbReference>
<dbReference type="RefSeq" id="WP_004930061.1">
    <property type="nucleotide sequence ID" value="NC_005966.1"/>
</dbReference>
<dbReference type="SMR" id="Q6FG19"/>
<dbReference type="STRING" id="202950.GCA_001485005_03174"/>
<dbReference type="GeneID" id="45232535"/>
<dbReference type="KEGG" id="aci:ACIAD0003"/>
<dbReference type="eggNOG" id="COG1195">
    <property type="taxonomic scope" value="Bacteria"/>
</dbReference>
<dbReference type="HOGENOM" id="CLU_040267_0_0_6"/>
<dbReference type="OrthoDB" id="9803889at2"/>
<dbReference type="BioCyc" id="ASP62977:ACIAD_RS00015-MONOMER"/>
<dbReference type="Proteomes" id="UP000000430">
    <property type="component" value="Chromosome"/>
</dbReference>
<dbReference type="GO" id="GO:0005737">
    <property type="term" value="C:cytoplasm"/>
    <property type="evidence" value="ECO:0007669"/>
    <property type="project" value="UniProtKB-SubCell"/>
</dbReference>
<dbReference type="GO" id="GO:0005524">
    <property type="term" value="F:ATP binding"/>
    <property type="evidence" value="ECO:0007669"/>
    <property type="project" value="UniProtKB-UniRule"/>
</dbReference>
<dbReference type="GO" id="GO:0003697">
    <property type="term" value="F:single-stranded DNA binding"/>
    <property type="evidence" value="ECO:0007669"/>
    <property type="project" value="UniProtKB-UniRule"/>
</dbReference>
<dbReference type="GO" id="GO:0006260">
    <property type="term" value="P:DNA replication"/>
    <property type="evidence" value="ECO:0007669"/>
    <property type="project" value="UniProtKB-UniRule"/>
</dbReference>
<dbReference type="GO" id="GO:0000731">
    <property type="term" value="P:DNA synthesis involved in DNA repair"/>
    <property type="evidence" value="ECO:0007669"/>
    <property type="project" value="TreeGrafter"/>
</dbReference>
<dbReference type="GO" id="GO:0006302">
    <property type="term" value="P:double-strand break repair"/>
    <property type="evidence" value="ECO:0007669"/>
    <property type="project" value="TreeGrafter"/>
</dbReference>
<dbReference type="GO" id="GO:0009432">
    <property type="term" value="P:SOS response"/>
    <property type="evidence" value="ECO:0007669"/>
    <property type="project" value="UniProtKB-UniRule"/>
</dbReference>
<dbReference type="Gene3D" id="3.40.50.300">
    <property type="entry name" value="P-loop containing nucleotide triphosphate hydrolases"/>
    <property type="match status" value="1"/>
</dbReference>
<dbReference type="Gene3D" id="1.20.1050.90">
    <property type="entry name" value="RecF/RecN/SMC, N-terminal domain"/>
    <property type="match status" value="1"/>
</dbReference>
<dbReference type="HAMAP" id="MF_00365">
    <property type="entry name" value="RecF"/>
    <property type="match status" value="1"/>
</dbReference>
<dbReference type="InterPro" id="IPR001238">
    <property type="entry name" value="DNA-binding_RecF"/>
</dbReference>
<dbReference type="InterPro" id="IPR027417">
    <property type="entry name" value="P-loop_NTPase"/>
</dbReference>
<dbReference type="InterPro" id="IPR003395">
    <property type="entry name" value="RecF/RecN/SMC_N"/>
</dbReference>
<dbReference type="InterPro" id="IPR042174">
    <property type="entry name" value="RecF_2"/>
</dbReference>
<dbReference type="NCBIfam" id="TIGR00611">
    <property type="entry name" value="recf"/>
    <property type="match status" value="1"/>
</dbReference>
<dbReference type="PANTHER" id="PTHR32182">
    <property type="entry name" value="DNA REPLICATION AND REPAIR PROTEIN RECF"/>
    <property type="match status" value="1"/>
</dbReference>
<dbReference type="PANTHER" id="PTHR32182:SF0">
    <property type="entry name" value="DNA REPLICATION AND REPAIR PROTEIN RECF"/>
    <property type="match status" value="1"/>
</dbReference>
<dbReference type="Pfam" id="PF02463">
    <property type="entry name" value="SMC_N"/>
    <property type="match status" value="1"/>
</dbReference>
<dbReference type="SUPFAM" id="SSF52540">
    <property type="entry name" value="P-loop containing nucleoside triphosphate hydrolases"/>
    <property type="match status" value="1"/>
</dbReference>
<keyword id="KW-0067">ATP-binding</keyword>
<keyword id="KW-0963">Cytoplasm</keyword>
<keyword id="KW-0227">DNA damage</keyword>
<keyword id="KW-0234">DNA repair</keyword>
<keyword id="KW-0235">DNA replication</keyword>
<keyword id="KW-0238">DNA-binding</keyword>
<keyword id="KW-0547">Nucleotide-binding</keyword>
<keyword id="KW-0742">SOS response</keyword>
<name>RECF_ACIAD</name>
<feature type="chain" id="PRO_1000048497" description="DNA replication and repair protein RecF">
    <location>
        <begin position="1"/>
        <end position="358"/>
    </location>
</feature>
<feature type="binding site" evidence="1">
    <location>
        <begin position="30"/>
        <end position="37"/>
    </location>
    <ligand>
        <name>ATP</name>
        <dbReference type="ChEBI" id="CHEBI:30616"/>
    </ligand>
</feature>
<proteinExistence type="inferred from homology"/>
<evidence type="ECO:0000255" key="1">
    <source>
        <dbReference type="HAMAP-Rule" id="MF_00365"/>
    </source>
</evidence>
<reference key="1">
    <citation type="journal article" date="2004" name="Nucleic Acids Res.">
        <title>Unique features revealed by the genome sequence of Acinetobacter sp. ADP1, a versatile and naturally transformation competent bacterium.</title>
        <authorList>
            <person name="Barbe V."/>
            <person name="Vallenet D."/>
            <person name="Fonknechten N."/>
            <person name="Kreimeyer A."/>
            <person name="Oztas S."/>
            <person name="Labarre L."/>
            <person name="Cruveiller S."/>
            <person name="Robert C."/>
            <person name="Duprat S."/>
            <person name="Wincker P."/>
            <person name="Ornston L.N."/>
            <person name="Weissenbach J."/>
            <person name="Marliere P."/>
            <person name="Cohen G.N."/>
            <person name="Medigue C."/>
        </authorList>
    </citation>
    <scope>NUCLEOTIDE SEQUENCE [LARGE SCALE GENOMIC DNA]</scope>
    <source>
        <strain>ATCC 33305 / BD413 / ADP1</strain>
    </source>
</reference>
<gene>
    <name evidence="1" type="primary">recF</name>
    <name type="ordered locus">ACIAD0003</name>
</gene>
<accession>Q6FG19</accession>